<evidence type="ECO:0000250" key="1">
    <source>
        <dbReference type="UniProtKB" id="Q99873"/>
    </source>
</evidence>
<evidence type="ECO:0000250" key="2">
    <source>
        <dbReference type="UniProtKB" id="Q9JIF0"/>
    </source>
</evidence>
<evidence type="ECO:0000255" key="3">
    <source>
        <dbReference type="PROSITE-ProRule" id="PRU01015"/>
    </source>
</evidence>
<evidence type="ECO:0000269" key="4">
    <source>
    </source>
</evidence>
<evidence type="ECO:0000269" key="5">
    <source>
    </source>
</evidence>
<evidence type="ECO:0000269" key="6">
    <source>
    </source>
</evidence>
<evidence type="ECO:0000269" key="7">
    <source>
    </source>
</evidence>
<evidence type="ECO:0000269" key="8">
    <source>
    </source>
</evidence>
<evidence type="ECO:0000269" key="9">
    <source>
    </source>
</evidence>
<evidence type="ECO:0000305" key="10"/>
<evidence type="ECO:0000305" key="11">
    <source>
    </source>
</evidence>
<evidence type="ECO:0000312" key="12">
    <source>
        <dbReference type="RGD" id="62020"/>
    </source>
</evidence>
<evidence type="ECO:0007829" key="13">
    <source>
        <dbReference type="PDB" id="1ORH"/>
    </source>
</evidence>
<evidence type="ECO:0007829" key="14">
    <source>
        <dbReference type="PDB" id="1ORI"/>
    </source>
</evidence>
<evidence type="ECO:0007829" key="15">
    <source>
        <dbReference type="PDB" id="3Q7E"/>
    </source>
</evidence>
<keyword id="KW-0002">3D-structure</keyword>
<keyword id="KW-0007">Acetylation</keyword>
<keyword id="KW-0963">Cytoplasm</keyword>
<keyword id="KW-1017">Isopeptide bond</keyword>
<keyword id="KW-0458">Lysosome</keyword>
<keyword id="KW-0472">Membrane</keyword>
<keyword id="KW-0489">Methyltransferase</keyword>
<keyword id="KW-0539">Nucleus</keyword>
<keyword id="KW-0597">Phosphoprotein</keyword>
<keyword id="KW-1185">Reference proteome</keyword>
<keyword id="KW-0949">S-adenosyl-L-methionine</keyword>
<keyword id="KW-0808">Transferase</keyword>
<keyword id="KW-0832">Ubl conjugation</keyword>
<proteinExistence type="evidence at protein level"/>
<sequence length="353" mass="40522">MAAAEAANCIMEVSCGQAESSEKPNAEDMTSKDYYFDSYAHFGIHEEMLKDEVRTLTYRNSMFHNRHLFKDKVVLDVGSGTGILCMFAAKAGARKVIGIECSSISDYAVKIVKANKLDHVVTIIKGKVEEVELPVEKVDIIISEWMGYCLFYESMLNTVLHARDKWLAPDGLIFPDRATLYVTAIEDRQYKDYKIHWWENVYGFDMSCIKDVAIKEPLVDVVDPKQLVTNACLIKEVDIYTVKVEDLTFTSPFCLQVKRNDYVHALVAYFNIEFTRCHKRTGFSTSPESPYTHWKQTVFYMEDYLTVKTGEEIFGTIGMRPNAKNNRDLDFTIDLDFKGQLCELSCSTDYRMR</sequence>
<name>ANM1_RAT</name>
<feature type="chain" id="PRO_0000212323" description="Protein arginine N-methyltransferase 1">
    <location>
        <begin position="1"/>
        <end position="353"/>
    </location>
</feature>
<feature type="domain" description="SAM-dependent MTase PRMT-type" evidence="3">
    <location>
        <begin position="32"/>
        <end position="353"/>
    </location>
</feature>
<feature type="active site" evidence="4">
    <location>
        <position position="144"/>
    </location>
</feature>
<feature type="active site" evidence="4">
    <location>
        <position position="153"/>
    </location>
</feature>
<feature type="binding site" evidence="4">
    <location>
        <position position="45"/>
    </location>
    <ligand>
        <name>S-adenosyl-L-methionine</name>
        <dbReference type="ChEBI" id="CHEBI:59789"/>
    </ligand>
</feature>
<feature type="binding site" evidence="4">
    <location>
        <position position="54"/>
    </location>
    <ligand>
        <name>S-adenosyl-L-methionine</name>
        <dbReference type="ChEBI" id="CHEBI:59789"/>
    </ligand>
</feature>
<feature type="binding site" evidence="4">
    <location>
        <position position="78"/>
    </location>
    <ligand>
        <name>S-adenosyl-L-methionine</name>
        <dbReference type="ChEBI" id="CHEBI:59789"/>
    </ligand>
</feature>
<feature type="binding site" evidence="4">
    <location>
        <position position="100"/>
    </location>
    <ligand>
        <name>S-adenosyl-L-methionine</name>
        <dbReference type="ChEBI" id="CHEBI:59789"/>
    </ligand>
</feature>
<feature type="binding site" evidence="4">
    <location>
        <position position="129"/>
    </location>
    <ligand>
        <name>S-adenosyl-L-methionine</name>
        <dbReference type="ChEBI" id="CHEBI:59789"/>
    </ligand>
</feature>
<feature type="modified residue" description="N6-succinyllysine" evidence="2">
    <location>
        <position position="116"/>
    </location>
</feature>
<feature type="modified residue" description="N6-acetyllysine" evidence="2">
    <location>
        <position position="210"/>
    </location>
</feature>
<feature type="modified residue" description="N6-acetyllysine" evidence="2">
    <location>
        <position position="215"/>
    </location>
</feature>
<feature type="modified residue" description="Phosphoserine" evidence="1">
    <location>
        <position position="286"/>
    </location>
</feature>
<feature type="modified residue" description="Phosphoserine" evidence="1">
    <location>
        <position position="289"/>
    </location>
</feature>
<feature type="cross-link" description="Glycyl lysine isopeptide (Lys-Gly) (interchain with G-Cter in ubiquitin)" evidence="2">
    <location>
        <position position="127"/>
    </location>
</feature>
<feature type="mutagenesis site" description="Abolishes catalytic activity. Disrupts interaction of MAP3K5/ASK1 with thioredoxin. Abolishes inhibition of MAP3K5 and activation of JNK1. No effect on interaction with MAP3K5." evidence="8">
    <original>G</original>
    <variation>R</variation>
    <location>
        <position position="80"/>
    </location>
</feature>
<feature type="mutagenesis site" description="Reduces catalytic activity 10-fold, and causes higher order oligomers of the protein." evidence="4">
    <original>E</original>
    <variation>D</variation>
    <location>
        <position position="144"/>
    </location>
</feature>
<feature type="mutagenesis site" description="Reduces catalytic activity 3000-fold, and causes higher order oligomers of the protein." evidence="4">
    <original>E</original>
    <variation>Q</variation>
    <location>
        <position position="144"/>
    </location>
</feature>
<feature type="mutagenesis site" description="Reduces catalytic activity to 0.03%, but does not affect oligomerization." evidence="4">
    <original>E</original>
    <variation>D</variation>
    <location>
        <position position="153"/>
    </location>
</feature>
<feature type="mutagenesis site" description="Completely abolishes catalytic activity, but does not affect oligomerization." evidence="4">
    <original>E</original>
    <variation>Q</variation>
    <location>
        <position position="153"/>
    </location>
</feature>
<feature type="turn" evidence="13">
    <location>
        <begin position="40"/>
        <end position="42"/>
    </location>
</feature>
<feature type="helix" evidence="15">
    <location>
        <begin position="43"/>
        <end position="50"/>
    </location>
</feature>
<feature type="helix" evidence="15">
    <location>
        <begin position="52"/>
        <end position="63"/>
    </location>
</feature>
<feature type="helix" evidence="15">
    <location>
        <begin position="66"/>
        <end position="69"/>
    </location>
</feature>
<feature type="strand" evidence="15">
    <location>
        <begin position="73"/>
        <end position="78"/>
    </location>
</feature>
<feature type="helix" evidence="15">
    <location>
        <begin position="83"/>
        <end position="90"/>
    </location>
</feature>
<feature type="strand" evidence="15">
    <location>
        <begin position="94"/>
        <end position="100"/>
    </location>
</feature>
<feature type="helix" evidence="15">
    <location>
        <begin position="104"/>
        <end position="114"/>
    </location>
</feature>
<feature type="turn" evidence="15">
    <location>
        <begin position="118"/>
        <end position="120"/>
    </location>
</feature>
<feature type="strand" evidence="15">
    <location>
        <begin position="121"/>
        <end position="126"/>
    </location>
</feature>
<feature type="turn" evidence="15">
    <location>
        <begin position="128"/>
        <end position="130"/>
    </location>
</feature>
<feature type="strand" evidence="15">
    <location>
        <begin position="134"/>
        <end position="136"/>
    </location>
</feature>
<feature type="strand" evidence="15">
    <location>
        <begin position="138"/>
        <end position="143"/>
    </location>
</feature>
<feature type="strand" evidence="15">
    <location>
        <begin position="147"/>
        <end position="152"/>
    </location>
</feature>
<feature type="helix" evidence="15">
    <location>
        <begin position="156"/>
        <end position="166"/>
    </location>
</feature>
<feature type="strand" evidence="15">
    <location>
        <begin position="167"/>
        <end position="175"/>
    </location>
</feature>
<feature type="strand" evidence="15">
    <location>
        <begin position="177"/>
        <end position="185"/>
    </location>
</feature>
<feature type="helix" evidence="15">
    <location>
        <begin position="188"/>
        <end position="194"/>
    </location>
</feature>
<feature type="helix" evidence="15">
    <location>
        <begin position="196"/>
        <end position="199"/>
    </location>
</feature>
<feature type="helix" evidence="15">
    <location>
        <begin position="207"/>
        <end position="209"/>
    </location>
</feature>
<feature type="helix" evidence="15">
    <location>
        <begin position="210"/>
        <end position="214"/>
    </location>
</feature>
<feature type="strand" evidence="15">
    <location>
        <begin position="218"/>
        <end position="220"/>
    </location>
</feature>
<feature type="helix" evidence="15">
    <location>
        <begin position="224"/>
        <end position="226"/>
    </location>
</feature>
<feature type="strand" evidence="15">
    <location>
        <begin position="227"/>
        <end position="238"/>
    </location>
</feature>
<feature type="turn" evidence="15">
    <location>
        <begin position="239"/>
        <end position="241"/>
    </location>
</feature>
<feature type="helix" evidence="15">
    <location>
        <begin position="244"/>
        <end position="247"/>
    </location>
</feature>
<feature type="strand" evidence="15">
    <location>
        <begin position="248"/>
        <end position="257"/>
    </location>
</feature>
<feature type="strand" evidence="15">
    <location>
        <begin position="259"/>
        <end position="273"/>
    </location>
</feature>
<feature type="strand" evidence="15">
    <location>
        <begin position="277"/>
        <end position="279"/>
    </location>
</feature>
<feature type="strand" evidence="15">
    <location>
        <begin position="282"/>
        <end position="284"/>
    </location>
</feature>
<feature type="strand" evidence="15">
    <location>
        <begin position="296"/>
        <end position="307"/>
    </location>
</feature>
<feature type="strand" evidence="15">
    <location>
        <begin position="312"/>
        <end position="321"/>
    </location>
</feature>
<feature type="strand" evidence="14">
    <location>
        <begin position="323"/>
        <end position="325"/>
    </location>
</feature>
<feature type="strand" evidence="15">
    <location>
        <begin position="329"/>
        <end position="338"/>
    </location>
</feature>
<feature type="strand" evidence="15">
    <location>
        <begin position="343"/>
        <end position="352"/>
    </location>
</feature>
<accession>Q63009</accession>
<dbReference type="EC" id="2.1.1.319" evidence="7"/>
<dbReference type="EMBL" id="U60882">
    <property type="protein sequence ID" value="AAC52622.1"/>
    <property type="molecule type" value="mRNA"/>
</dbReference>
<dbReference type="EMBL" id="BC078815">
    <property type="protein sequence ID" value="AAH78815.1"/>
    <property type="molecule type" value="mRNA"/>
</dbReference>
<dbReference type="RefSeq" id="NP_077339.1">
    <property type="nucleotide sequence ID" value="NM_024363.1"/>
</dbReference>
<dbReference type="PDB" id="1OR8">
    <property type="method" value="X-ray"/>
    <property type="resolution" value="2.35 A"/>
    <property type="chains" value="A=14-353"/>
</dbReference>
<dbReference type="PDB" id="1ORH">
    <property type="method" value="X-ray"/>
    <property type="resolution" value="2.64 A"/>
    <property type="chains" value="A=1-353"/>
</dbReference>
<dbReference type="PDB" id="1ORI">
    <property type="method" value="X-ray"/>
    <property type="resolution" value="2.50 A"/>
    <property type="chains" value="A=11-353"/>
</dbReference>
<dbReference type="PDB" id="3Q7E">
    <property type="method" value="X-ray"/>
    <property type="resolution" value="2.20 A"/>
    <property type="chains" value="A=14-353"/>
</dbReference>
<dbReference type="PDBsum" id="1OR8"/>
<dbReference type="PDBsum" id="1ORH"/>
<dbReference type="PDBsum" id="1ORI"/>
<dbReference type="PDBsum" id="3Q7E"/>
<dbReference type="SMR" id="Q63009"/>
<dbReference type="BioGRID" id="248825">
    <property type="interactions" value="4"/>
</dbReference>
<dbReference type="FunCoup" id="Q63009">
    <property type="interactions" value="3375"/>
</dbReference>
<dbReference type="IntAct" id="Q63009">
    <property type="interactions" value="6"/>
</dbReference>
<dbReference type="MINT" id="Q63009"/>
<dbReference type="STRING" id="10116.ENSRNOP00000063624"/>
<dbReference type="BindingDB" id="Q63009"/>
<dbReference type="ChEMBL" id="CHEMBL1275220"/>
<dbReference type="iPTMnet" id="Q63009"/>
<dbReference type="PhosphoSitePlus" id="Q63009"/>
<dbReference type="jPOST" id="Q63009"/>
<dbReference type="PaxDb" id="10116-ENSRNOP00000063624"/>
<dbReference type="GeneID" id="60421"/>
<dbReference type="KEGG" id="rno:60421"/>
<dbReference type="UCSC" id="RGD:62020">
    <property type="organism name" value="rat"/>
</dbReference>
<dbReference type="AGR" id="RGD:62020"/>
<dbReference type="CTD" id="3276"/>
<dbReference type="RGD" id="62020">
    <property type="gene designation" value="Prmt1"/>
</dbReference>
<dbReference type="VEuPathDB" id="HostDB:ENSRNOG00000026109"/>
<dbReference type="eggNOG" id="KOG1499">
    <property type="taxonomic scope" value="Eukaryota"/>
</dbReference>
<dbReference type="HOGENOM" id="CLU_017375_1_1_1"/>
<dbReference type="InParanoid" id="Q63009"/>
<dbReference type="OrthoDB" id="7848332at2759"/>
<dbReference type="BRENDA" id="2.1.1.319">
    <property type="organism ID" value="5301"/>
</dbReference>
<dbReference type="Reactome" id="R-RNO-3214858">
    <property type="pathway name" value="RMTs methylate histone arginines"/>
</dbReference>
<dbReference type="Reactome" id="R-RNO-8936459">
    <property type="pathway name" value="RUNX1 regulates genes involved in megakaryocyte differentiation and platelet function"/>
</dbReference>
<dbReference type="Reactome" id="R-RNO-9009391">
    <property type="pathway name" value="Extra-nuclear estrogen signaling"/>
</dbReference>
<dbReference type="Reactome" id="R-RNO-9018519">
    <property type="pathway name" value="Estrogen-dependent gene expression"/>
</dbReference>
<dbReference type="SABIO-RK" id="Q63009"/>
<dbReference type="EvolutionaryTrace" id="Q63009"/>
<dbReference type="PRO" id="PR:Q63009"/>
<dbReference type="Proteomes" id="UP000002494">
    <property type="component" value="Chromosome 1"/>
</dbReference>
<dbReference type="Bgee" id="ENSRNOG00000026109">
    <property type="expression patterns" value="Expressed in ovary and 19 other cell types or tissues"/>
</dbReference>
<dbReference type="GO" id="GO:0005737">
    <property type="term" value="C:cytoplasm"/>
    <property type="evidence" value="ECO:0000266"/>
    <property type="project" value="RGD"/>
</dbReference>
<dbReference type="GO" id="GO:0005829">
    <property type="term" value="C:cytosol"/>
    <property type="evidence" value="ECO:0000314"/>
    <property type="project" value="UniProtKB"/>
</dbReference>
<dbReference type="GO" id="GO:0005765">
    <property type="term" value="C:lysosomal membrane"/>
    <property type="evidence" value="ECO:0000266"/>
    <property type="project" value="RGD"/>
</dbReference>
<dbReference type="GO" id="GO:0034709">
    <property type="term" value="C:methylosome"/>
    <property type="evidence" value="ECO:0000250"/>
    <property type="project" value="UniProtKB"/>
</dbReference>
<dbReference type="GO" id="GO:0005654">
    <property type="term" value="C:nucleoplasm"/>
    <property type="evidence" value="ECO:0007669"/>
    <property type="project" value="UniProtKB-SubCell"/>
</dbReference>
<dbReference type="GO" id="GO:0005634">
    <property type="term" value="C:nucleus"/>
    <property type="evidence" value="ECO:0000266"/>
    <property type="project" value="RGD"/>
</dbReference>
<dbReference type="GO" id="GO:0032991">
    <property type="term" value="C:protein-containing complex"/>
    <property type="evidence" value="ECO:0000314"/>
    <property type="project" value="RGD"/>
</dbReference>
<dbReference type="GO" id="GO:0019899">
    <property type="term" value="F:enzyme binding"/>
    <property type="evidence" value="ECO:0000266"/>
    <property type="project" value="RGD"/>
</dbReference>
<dbReference type="GO" id="GO:0106080">
    <property type="term" value="F:GATOR1 complex binding"/>
    <property type="evidence" value="ECO:0000250"/>
    <property type="project" value="UniProtKB"/>
</dbReference>
<dbReference type="GO" id="GO:0044020">
    <property type="term" value="F:histone H4R3 methyltransferase activity"/>
    <property type="evidence" value="ECO:0000250"/>
    <property type="project" value="UniProtKB"/>
</dbReference>
<dbReference type="GO" id="GO:0042054">
    <property type="term" value="F:histone methyltransferase activity"/>
    <property type="evidence" value="ECO:0000314"/>
    <property type="project" value="MGI"/>
</dbReference>
<dbReference type="GO" id="GO:0042802">
    <property type="term" value="F:identical protein binding"/>
    <property type="evidence" value="ECO:0000353"/>
    <property type="project" value="IntAct"/>
</dbReference>
<dbReference type="GO" id="GO:0008327">
    <property type="term" value="F:methyl-CpG binding"/>
    <property type="evidence" value="ECO:0000250"/>
    <property type="project" value="UniProtKB"/>
</dbReference>
<dbReference type="GO" id="GO:0048273">
    <property type="term" value="F:mitogen-activated protein kinase p38 binding"/>
    <property type="evidence" value="ECO:0000266"/>
    <property type="project" value="RGD"/>
</dbReference>
<dbReference type="GO" id="GO:0008170">
    <property type="term" value="F:N-methyltransferase activity"/>
    <property type="evidence" value="ECO:0000266"/>
    <property type="project" value="RGD"/>
</dbReference>
<dbReference type="GO" id="GO:0008276">
    <property type="term" value="F:protein methyltransferase activity"/>
    <property type="evidence" value="ECO:0000314"/>
    <property type="project" value="UniProtKB"/>
</dbReference>
<dbReference type="GO" id="GO:0016274">
    <property type="term" value="F:protein-arginine N-methyltransferase activity"/>
    <property type="evidence" value="ECO:0000314"/>
    <property type="project" value="RGD"/>
</dbReference>
<dbReference type="GO" id="GO:0035242">
    <property type="term" value="F:protein-arginine omega-N asymmetric methyltransferase activity"/>
    <property type="evidence" value="ECO:0000314"/>
    <property type="project" value="UniProtKB"/>
</dbReference>
<dbReference type="GO" id="GO:0035241">
    <property type="term" value="F:protein-arginine omega-N monomethyltransferase activity"/>
    <property type="evidence" value="ECO:0000314"/>
    <property type="project" value="MGI"/>
</dbReference>
<dbReference type="GO" id="GO:1904047">
    <property type="term" value="F:S-adenosyl-L-methionine binding"/>
    <property type="evidence" value="ECO:0000314"/>
    <property type="project" value="UniProtKB"/>
</dbReference>
<dbReference type="GO" id="GO:0008757">
    <property type="term" value="F:S-adenosylmethionine-dependent methyltransferase activity"/>
    <property type="evidence" value="ECO:0000304"/>
    <property type="project" value="RGD"/>
</dbReference>
<dbReference type="GO" id="GO:0030519">
    <property type="term" value="F:snoRNP binding"/>
    <property type="evidence" value="ECO:0000314"/>
    <property type="project" value="RGD"/>
</dbReference>
<dbReference type="GO" id="GO:0048738">
    <property type="term" value="P:cardiac muscle tissue development"/>
    <property type="evidence" value="ECO:0000250"/>
    <property type="project" value="UniProtKB"/>
</dbReference>
<dbReference type="GO" id="GO:0061431">
    <property type="term" value="P:cellular response to methionine"/>
    <property type="evidence" value="ECO:0000250"/>
    <property type="project" value="UniProtKB"/>
</dbReference>
<dbReference type="GO" id="GO:0006338">
    <property type="term" value="P:chromatin remodeling"/>
    <property type="evidence" value="ECO:0000318"/>
    <property type="project" value="GO_Central"/>
</dbReference>
<dbReference type="GO" id="GO:0006974">
    <property type="term" value="P:DNA damage response"/>
    <property type="evidence" value="ECO:0000266"/>
    <property type="project" value="RGD"/>
</dbReference>
<dbReference type="GO" id="GO:0001701">
    <property type="term" value="P:in utero embryonic development"/>
    <property type="evidence" value="ECO:0000266"/>
    <property type="project" value="RGD"/>
</dbReference>
<dbReference type="GO" id="GO:0097421">
    <property type="term" value="P:liver regeneration"/>
    <property type="evidence" value="ECO:0000270"/>
    <property type="project" value="RGD"/>
</dbReference>
<dbReference type="GO" id="GO:0046329">
    <property type="term" value="P:negative regulation of JNK cascade"/>
    <property type="evidence" value="ECO:0000250"/>
    <property type="project" value="UniProtKB"/>
</dbReference>
<dbReference type="GO" id="GO:0045653">
    <property type="term" value="P:negative regulation of megakaryocyte differentiation"/>
    <property type="evidence" value="ECO:0000250"/>
    <property type="project" value="UniProtKB"/>
</dbReference>
<dbReference type="GO" id="GO:0031175">
    <property type="term" value="P:neuron projection development"/>
    <property type="evidence" value="ECO:0000266"/>
    <property type="project" value="RGD"/>
</dbReference>
<dbReference type="GO" id="GO:0019919">
    <property type="term" value="P:peptidyl-arginine methylation, to asymmetrical-dimethyl arginine"/>
    <property type="evidence" value="ECO:0000314"/>
    <property type="project" value="MGI"/>
</dbReference>
<dbReference type="GO" id="GO:0035247">
    <property type="term" value="P:peptidyl-arginine omega-N-methylation"/>
    <property type="evidence" value="ECO:0000314"/>
    <property type="project" value="MGI"/>
</dbReference>
<dbReference type="GO" id="GO:0008284">
    <property type="term" value="P:positive regulation of cell population proliferation"/>
    <property type="evidence" value="ECO:0000250"/>
    <property type="project" value="UniProtKB"/>
</dbReference>
<dbReference type="GO" id="GO:1905168">
    <property type="term" value="P:positive regulation of double-strand break repair via homologous recombination"/>
    <property type="evidence" value="ECO:0000250"/>
    <property type="project" value="UniProtKB"/>
</dbReference>
<dbReference type="GO" id="GO:0045648">
    <property type="term" value="P:positive regulation of erythrocyte differentiation"/>
    <property type="evidence" value="ECO:0000314"/>
    <property type="project" value="BHF-UCL"/>
</dbReference>
<dbReference type="GO" id="GO:0046985">
    <property type="term" value="P:positive regulation of hemoglobin biosynthetic process"/>
    <property type="evidence" value="ECO:0000314"/>
    <property type="project" value="BHF-UCL"/>
</dbReference>
<dbReference type="GO" id="GO:1900745">
    <property type="term" value="P:positive regulation of p38MAPK cascade"/>
    <property type="evidence" value="ECO:0000314"/>
    <property type="project" value="BHF-UCL"/>
</dbReference>
<dbReference type="GO" id="GO:1904263">
    <property type="term" value="P:positive regulation of TORC1 signaling"/>
    <property type="evidence" value="ECO:0000250"/>
    <property type="project" value="UniProtKB"/>
</dbReference>
<dbReference type="GO" id="GO:0045727">
    <property type="term" value="P:positive regulation of translation"/>
    <property type="evidence" value="ECO:0000266"/>
    <property type="project" value="RGD"/>
</dbReference>
<dbReference type="GO" id="GO:0051260">
    <property type="term" value="P:protein homooligomerization"/>
    <property type="evidence" value="ECO:0000250"/>
    <property type="project" value="UniProtKB"/>
</dbReference>
<dbReference type="GO" id="GO:0006479">
    <property type="term" value="P:protein methylation"/>
    <property type="evidence" value="ECO:0000314"/>
    <property type="project" value="MGI"/>
</dbReference>
<dbReference type="GO" id="GO:0030510">
    <property type="term" value="P:regulation of BMP signaling pathway"/>
    <property type="evidence" value="ECO:0000266"/>
    <property type="project" value="RGD"/>
</dbReference>
<dbReference type="GO" id="GO:0006355">
    <property type="term" value="P:regulation of DNA-templated transcription"/>
    <property type="evidence" value="ECO:0000318"/>
    <property type="project" value="GO_Central"/>
</dbReference>
<dbReference type="GO" id="GO:0045652">
    <property type="term" value="P:regulation of megakaryocyte differentiation"/>
    <property type="evidence" value="ECO:0000250"/>
    <property type="project" value="UniProtKB"/>
</dbReference>
<dbReference type="GO" id="GO:0008380">
    <property type="term" value="P:RNA splicing"/>
    <property type="evidence" value="ECO:0000250"/>
    <property type="project" value="UniProtKB"/>
</dbReference>
<dbReference type="GO" id="GO:0046500">
    <property type="term" value="P:S-adenosylmethionine metabolic process"/>
    <property type="evidence" value="ECO:0000314"/>
    <property type="project" value="UniProtKB"/>
</dbReference>
<dbReference type="CDD" id="cd02440">
    <property type="entry name" value="AdoMet_MTases"/>
    <property type="match status" value="1"/>
</dbReference>
<dbReference type="FunFam" id="2.70.160.11:FF:000001">
    <property type="entry name" value="Blast:Protein arginine N-methyltransferase 1"/>
    <property type="match status" value="1"/>
</dbReference>
<dbReference type="FunFam" id="3.40.50.150:FF:000003">
    <property type="entry name" value="Blast:Protein arginine N-methyltransferase 1"/>
    <property type="match status" value="1"/>
</dbReference>
<dbReference type="Gene3D" id="2.70.160.11">
    <property type="entry name" value="Hnrnp arginine n-methyltransferase1"/>
    <property type="match status" value="1"/>
</dbReference>
<dbReference type="Gene3D" id="3.40.50.150">
    <property type="entry name" value="Vaccinia Virus protein VP39"/>
    <property type="match status" value="1"/>
</dbReference>
<dbReference type="InterPro" id="IPR025799">
    <property type="entry name" value="Arg_MeTrfase"/>
</dbReference>
<dbReference type="InterPro" id="IPR041698">
    <property type="entry name" value="Methyltransf_25"/>
</dbReference>
<dbReference type="InterPro" id="IPR055135">
    <property type="entry name" value="PRMT_dom"/>
</dbReference>
<dbReference type="InterPro" id="IPR029063">
    <property type="entry name" value="SAM-dependent_MTases_sf"/>
</dbReference>
<dbReference type="PANTHER" id="PTHR11006">
    <property type="entry name" value="PROTEIN ARGININE N-METHYLTRANSFERASE"/>
    <property type="match status" value="1"/>
</dbReference>
<dbReference type="PANTHER" id="PTHR11006:SF54">
    <property type="entry name" value="PROTEIN ARGININE N-METHYLTRANSFERASE 1"/>
    <property type="match status" value="1"/>
</dbReference>
<dbReference type="Pfam" id="PF13649">
    <property type="entry name" value="Methyltransf_25"/>
    <property type="match status" value="1"/>
</dbReference>
<dbReference type="Pfam" id="PF22528">
    <property type="entry name" value="PRMT_C"/>
    <property type="match status" value="1"/>
</dbReference>
<dbReference type="SUPFAM" id="SSF53335">
    <property type="entry name" value="S-adenosyl-L-methionine-dependent methyltransferases"/>
    <property type="match status" value="1"/>
</dbReference>
<dbReference type="PROSITE" id="PS51678">
    <property type="entry name" value="SAM_MT_PRMT"/>
    <property type="match status" value="1"/>
</dbReference>
<reference key="1">
    <citation type="journal article" date="1996" name="J. Biol. Chem.">
        <title>The mammalian immediate-early TIS21 protein and the leukemia-associated BTG1 protein interact with a protein-arginine N-methyltransferase.</title>
        <authorList>
            <person name="Lin W.-J."/>
            <person name="Gary J.D."/>
            <person name="Yang M.C."/>
            <person name="Clarke S."/>
            <person name="Herschman H.R."/>
        </authorList>
    </citation>
    <scope>NUCLEOTIDE SEQUENCE [MRNA]</scope>
    <scope>INTERACTION WITH BTG1; BTG2 AND IFNAR1</scope>
</reference>
<reference key="2">
    <citation type="journal article" date="2004" name="Genome Res.">
        <title>The status, quality, and expansion of the NIH full-length cDNA project: the Mammalian Gene Collection (MGC).</title>
        <authorList>
            <consortium name="The MGC Project Team"/>
        </authorList>
    </citation>
    <scope>NUCLEOTIDE SEQUENCE [LARGE SCALE MRNA]</scope>
    <source>
        <tissue>Kidney</tissue>
    </source>
</reference>
<reference key="3">
    <citation type="journal article" date="2005" name="Biochim. Biophys. Acta">
        <title>Multimerization of expressed protein-arginine methyltransferases during the growth and differentiation of rat liver.</title>
        <authorList>
            <person name="Lim Y."/>
            <person name="Kwon Y.H."/>
            <person name="Won N.H."/>
            <person name="Min B.H."/>
            <person name="Park I.S."/>
            <person name="Paik W.K."/>
            <person name="Kim S."/>
        </authorList>
    </citation>
    <scope>FUNCTION</scope>
    <scope>SUBCELLULAR LOCATION</scope>
</reference>
<reference key="4">
    <citation type="journal article" date="2008" name="Biochem. Biophys. Res. Commun.">
        <title>Involvement of PRMT1 in hnRNPQ activation and internalization of insulin receptor.</title>
        <authorList>
            <person name="Iwasaki H."/>
        </authorList>
    </citation>
    <scope>FUNCTION</scope>
</reference>
<reference key="5">
    <citation type="journal article" date="2009" name="Biochem. J.">
        <title>Kinetic analysis of human protein arginine N-methyltransferase 2: formation of monomethyl- and asymmetric dimethyl-arginine residues on histone H4.</title>
        <authorList>
            <person name="Lakowski T.M."/>
            <person name="Frankel A."/>
        </authorList>
    </citation>
    <scope>FUNCTION</scope>
    <scope>CATALYTIC ACTIVITY</scope>
    <scope>BIOPHYSICOCHEMICAL PROPERTIES</scope>
</reference>
<reference key="6">
    <citation type="journal article" date="2012" name="Cell Death Differ.">
        <title>Arginine methylation-dependent regulation of ASK1 signaling by PRMT1.</title>
        <authorList>
            <person name="Cho J.H."/>
            <person name="Lee M.K."/>
            <person name="Yoon K.W."/>
            <person name="Lee J."/>
            <person name="Cho S.G."/>
            <person name="Choi E.J."/>
        </authorList>
    </citation>
    <scope>FUNCTION</scope>
    <scope>INTERACTION WITH MAP3K5</scope>
    <scope>MUTAGENESIS OF GLY-80</scope>
</reference>
<reference key="7">
    <citation type="journal article" date="2003" name="Structure">
        <title>Structure of the predominant protein arginine methyltransferase PRMT1 and analysis of its binding to substrate peptides.</title>
        <authorList>
            <person name="Zhang X."/>
            <person name="Cheng X."/>
        </authorList>
    </citation>
    <scope>X-RAY CRYSTALLOGRAPHY (2.35 ANGSTROMS) IN COMPLEX WITH S-ADENOSYL-L-HOMOCYSTEINE AND PEPTIDE SUBSTRATE</scope>
    <scope>SUBUNIT</scope>
    <scope>FUNCTION</scope>
    <scope>ACTIVE SITE</scope>
    <scope>MUTAGENESIS OF GLU-144 AND GLU-153</scope>
</reference>
<comment type="function">
    <text evidence="1 2 4 5 6 7 8">Arginine methyltransferase that methylates (mono and asymmetric dimethylation) the guanidino nitrogens of arginyl residues present in proteins such as ESR1, histone H2, H3 and H4, FMR1, ILF3, HNRNPA1, HNRNPD, NFATC2IP, SUPT5H, TAF15, EWS, HABP4, SERBP1, RBM15, FOXO1, CHTOP, MAP3K5/ASK1 and MICU1 (PubMed:12737817, PubMed:15837430, PubMed:18492485, PubMed:19405910, PubMed:22095282). Constitutes the main enzyme that mediates monomethylation and asymmetric dimethylation of histone H4 'Arg-3' (H4R3me1 and H4R3me2a, respectively), a specific tag for epigenetic transcriptional activation (By similarity). May be involved in the regulation of TAF15 transcriptional activity, act as an activator of estrogen receptor (ER)-mediated transactivation, play a key role in neurite outgrowth and act as a negative regulator of megakaryocytic differentiation, by modulating p38 MAPK pathway (By similarity). Methylates RBM15, promoting ubiquitination and degradation of RBM15 (By similarity). Methylates MRE11 and TP53BP1, promoting the DNA damage response (By similarity). Methylates FOXO1 and retains it in the nucleus increasing its transcriptional activity (By similarity). Methylates CHTOP and this methylation is critical for its 5-hydroxymethylcytosine (5hmC)-binding activity (By similarity). Methylates MAP3K5/ASK1 at 'Arg-85' and 'Arg-87' which promotes association of MAP3K5 with thioredoxin and negatively regulates MAP3K5 association with TRAF2, inhibiting MAP3K5 stimulation and MAP3K5-induced activation of JNK (PubMed:22095282). Methylates H4R3 in genes involved in glioblastomagenesis in a CHTOP- and/or TET1-dependent manner (By similarity). Plays a role in regulating alternative splicing in the heart (By similarity). Methylates NPRL2 at 'Arg-78' leading to inhibition of its GTPase activator activity and then the GATOR1 complex and consequently inducing timely mTORC1 activation under methionine-sufficient conditions (By similarity).</text>
</comment>
<comment type="catalytic activity">
    <reaction evidence="7">
        <text>L-arginyl-[protein] + 2 S-adenosyl-L-methionine = N(omega),N(omega)-dimethyl-L-arginyl-[protein] + 2 S-adenosyl-L-homocysteine + 2 H(+)</text>
        <dbReference type="Rhea" id="RHEA:48096"/>
        <dbReference type="Rhea" id="RHEA-COMP:10532"/>
        <dbReference type="Rhea" id="RHEA-COMP:11991"/>
        <dbReference type="ChEBI" id="CHEBI:15378"/>
        <dbReference type="ChEBI" id="CHEBI:29965"/>
        <dbReference type="ChEBI" id="CHEBI:57856"/>
        <dbReference type="ChEBI" id="CHEBI:59789"/>
        <dbReference type="ChEBI" id="CHEBI:61897"/>
        <dbReference type="EC" id="2.1.1.319"/>
    </reaction>
    <physiologicalReaction direction="left-to-right" evidence="11">
        <dbReference type="Rhea" id="RHEA:48097"/>
    </physiologicalReaction>
</comment>
<comment type="catalytic activity">
    <reaction evidence="7">
        <text>L-arginyl-[protein] + S-adenosyl-L-methionine = N(omega)-methyl-L-arginyl-[protein] + S-adenosyl-L-homocysteine + H(+)</text>
        <dbReference type="Rhea" id="RHEA:48100"/>
        <dbReference type="Rhea" id="RHEA-COMP:10532"/>
        <dbReference type="Rhea" id="RHEA-COMP:11990"/>
        <dbReference type="ChEBI" id="CHEBI:15378"/>
        <dbReference type="ChEBI" id="CHEBI:29965"/>
        <dbReference type="ChEBI" id="CHEBI:57856"/>
        <dbReference type="ChEBI" id="CHEBI:59789"/>
        <dbReference type="ChEBI" id="CHEBI:65280"/>
    </reaction>
    <physiologicalReaction direction="left-to-right" evidence="11">
        <dbReference type="Rhea" id="RHEA:48101"/>
    </physiologicalReaction>
</comment>
<comment type="catalytic activity">
    <reaction evidence="7">
        <text>N(omega)-methyl-L-arginyl-[protein] + S-adenosyl-L-methionine = N(omega),N(omega)-dimethyl-L-arginyl-[protein] + S-adenosyl-L-homocysteine + H(+)</text>
        <dbReference type="Rhea" id="RHEA:48104"/>
        <dbReference type="Rhea" id="RHEA-COMP:11990"/>
        <dbReference type="Rhea" id="RHEA-COMP:11991"/>
        <dbReference type="ChEBI" id="CHEBI:15378"/>
        <dbReference type="ChEBI" id="CHEBI:57856"/>
        <dbReference type="ChEBI" id="CHEBI:59789"/>
        <dbReference type="ChEBI" id="CHEBI:61897"/>
        <dbReference type="ChEBI" id="CHEBI:65280"/>
    </reaction>
    <physiologicalReaction direction="left-to-right" evidence="11">
        <dbReference type="Rhea" id="RHEA:48105"/>
    </physiologicalReaction>
</comment>
<comment type="biophysicochemical properties">
    <kinetics>
        <KM evidence="7">1 uM for AdoMet</KM>
        <KM evidence="7">4.2 uM for histone H4</KM>
        <Vmax evidence="7">1.2 nmol/min/mg enzyme toward AdoMet</Vmax>
        <Vmax evidence="7">1.24 nmol/min/mg enzyme toward histone H4</Vmax>
    </kinetics>
</comment>
<comment type="subunit">
    <text evidence="1 4 8 9">Homodimer and heterodimer with PRMT8. Homooctamer; individual homodimers associates to form a homooctamer. Interacts with NFATC2IP. Interacts with ILF3 and SUPT5H. Individual homodimers can associate to form a homohexamer. Interacts with FOXO1; the interaction methylates FOXO1, retaining it in the nucleus and increasing its transcriptional activity. Methylation of FOXO1 is increased with oxidative stress. Interacts with CHTOP; the interaction methylates CHTOP, enabling its interaction with the 5FMC complex (By similarity). Interacts with BTG1, BTG2 and IFNAR1. Interacts with and probably methylates ATXN2L (By similarity). Component of the methylosome, a 20S complex containing at least CLNS1A/pICln, PRMT5/SKB1, WDR77/MEP50, PRMT1 and ERH (By similarity). Interacts with DHX9 (via RGG region) (By similarity). Interacts (via N-terminus) with HABP4 (By similarity). Interacts with MAP3K5/ASK1; the interaction results in MAP3K5 methylation by PRMT1 which inhibits MAP3K5 activation (PubMed:22095282). Interacts with TRIM48; the interaction results in ubiquitination of PRMT1 by TRIM48, leading to PRMT1 proteasomal degradation and activation of MAP3K5 (By similarity). Interacts with GATOR1 complex; this interaction is S-adenosyl-L-methionine (SAM) dependent and is perturbated by SAMTOR in a SAM-sensitive manner (By similarity). Interacts with GFI1; promoting recognition and binding of MRE11 and TP53BP1 substrates by PRMT1 (By similarity).</text>
</comment>
<comment type="interaction">
    <interactant intactId="EBI-78708">
        <id>Q63009</id>
    </interactant>
    <interactant intactId="EBI-78714">
        <id>Q9JIL3</id>
        <label>Ilf3</label>
    </interactant>
    <organismsDiffer>false</organismsDiffer>
    <experiments>2</experiments>
</comment>
<comment type="interaction">
    <interactant intactId="EBI-78708">
        <id>Q63009</id>
    </interactant>
    <interactant intactId="EBI-78708">
        <id>Q63009</id>
        <label>Prmt1</label>
    </interactant>
    <organismsDiffer>false</organismsDiffer>
    <experiments>2</experiments>
</comment>
<comment type="interaction">
    <interactant intactId="EBI-78708">
        <id>Q63009</id>
    </interactant>
    <interactant intactId="EBI-1047529">
        <id>P62633</id>
        <label>CNBP</label>
    </interactant>
    <organismsDiffer>true</organismsDiffer>
    <experiments>2</experiments>
</comment>
<comment type="subcellular location">
    <subcellularLocation>
        <location evidence="2">Nucleus</location>
    </subcellularLocation>
    <subcellularLocation>
        <location evidence="2">Nucleus</location>
        <location evidence="2">Nucleoplasm</location>
    </subcellularLocation>
    <subcellularLocation>
        <location evidence="5">Cytoplasm</location>
        <location evidence="5">Cytosol</location>
    </subcellularLocation>
    <subcellularLocation>
        <location evidence="1">Cytoplasm</location>
    </subcellularLocation>
    <subcellularLocation>
        <location evidence="1">Lysosome membrane</location>
    </subcellularLocation>
    <text evidence="1 2">Mostly found in the cytoplasm. Colocalizes with CHTOP within the nucleus. Low levels detected also in the chromatin fraction (By similarity). Upon methionine stimulation, localizes to the lysosome in an NPRL2-dependent manner (By similarity).</text>
</comment>
<comment type="tissue specificity">
    <text>Ubiquitous.</text>
</comment>
<comment type="PTM">
    <text evidence="1 2">Polyubiquitinated at Lys-127 by the SCF(FBXL17) complex, leading to its subsequent degradation (By similarity). Ubiquitination is regulated by acetylation at Lys-210 and Lys-215 (By similarity). Polyubiquitinated by E3 ubiquitin-protein ligase TRIM48, leading to suppression of MAP3K5/ASK1 methylation and subsequent MAP3K5 activation (By similarity).</text>
</comment>
<comment type="PTM">
    <text evidence="2">Acetylation at Lys-210 and Lys-215 regulates ubiquitination by the SCF(FBXL17) complex. Acetylated at Lys-215 by p300/EP300. Deacetylated at Lys-210 and Lys-215 by SIRT1.</text>
</comment>
<comment type="similarity">
    <text evidence="3">Belongs to the class I-like SAM-binding methyltransferase superfamily. Protein arginine N-methyltransferase family.</text>
</comment>
<protein>
    <recommendedName>
        <fullName evidence="10">Protein arginine N-methyltransferase 1</fullName>
        <ecNumber evidence="7">2.1.1.319</ecNumber>
    </recommendedName>
    <alternativeName>
        <fullName>Histone-arginine N-methyltransferase PRMT1</fullName>
    </alternativeName>
</protein>
<organism>
    <name type="scientific">Rattus norvegicus</name>
    <name type="common">Rat</name>
    <dbReference type="NCBI Taxonomy" id="10116"/>
    <lineage>
        <taxon>Eukaryota</taxon>
        <taxon>Metazoa</taxon>
        <taxon>Chordata</taxon>
        <taxon>Craniata</taxon>
        <taxon>Vertebrata</taxon>
        <taxon>Euteleostomi</taxon>
        <taxon>Mammalia</taxon>
        <taxon>Eutheria</taxon>
        <taxon>Euarchontoglires</taxon>
        <taxon>Glires</taxon>
        <taxon>Rodentia</taxon>
        <taxon>Myomorpha</taxon>
        <taxon>Muroidea</taxon>
        <taxon>Muridae</taxon>
        <taxon>Murinae</taxon>
        <taxon>Rattus</taxon>
    </lineage>
</organism>
<gene>
    <name evidence="12" type="primary">Prmt1</name>
    <name type="synonym">Hrmt1l2</name>
</gene>